<organism>
    <name type="scientific">Shewanella sediminis (strain HAW-EB3)</name>
    <dbReference type="NCBI Taxonomy" id="425104"/>
    <lineage>
        <taxon>Bacteria</taxon>
        <taxon>Pseudomonadati</taxon>
        <taxon>Pseudomonadota</taxon>
        <taxon>Gammaproteobacteria</taxon>
        <taxon>Alteromonadales</taxon>
        <taxon>Shewanellaceae</taxon>
        <taxon>Shewanella</taxon>
    </lineage>
</organism>
<feature type="chain" id="PRO_1000120409" description="GMP synthase [glutamine-hydrolyzing]">
    <location>
        <begin position="1"/>
        <end position="525"/>
    </location>
</feature>
<feature type="domain" description="Glutamine amidotransferase type-1" evidence="1">
    <location>
        <begin position="8"/>
        <end position="207"/>
    </location>
</feature>
<feature type="domain" description="GMPS ATP-PPase" evidence="1">
    <location>
        <begin position="208"/>
        <end position="400"/>
    </location>
</feature>
<feature type="active site" description="Nucleophile" evidence="1">
    <location>
        <position position="85"/>
    </location>
</feature>
<feature type="active site" evidence="1">
    <location>
        <position position="181"/>
    </location>
</feature>
<feature type="active site" evidence="1">
    <location>
        <position position="183"/>
    </location>
</feature>
<feature type="binding site" evidence="1">
    <location>
        <begin position="235"/>
        <end position="241"/>
    </location>
    <ligand>
        <name>ATP</name>
        <dbReference type="ChEBI" id="CHEBI:30616"/>
    </ligand>
</feature>
<keyword id="KW-0067">ATP-binding</keyword>
<keyword id="KW-0315">Glutamine amidotransferase</keyword>
<keyword id="KW-0332">GMP biosynthesis</keyword>
<keyword id="KW-0436">Ligase</keyword>
<keyword id="KW-0547">Nucleotide-binding</keyword>
<keyword id="KW-0658">Purine biosynthesis</keyword>
<keyword id="KW-1185">Reference proteome</keyword>
<proteinExistence type="inferred from homology"/>
<dbReference type="EC" id="6.3.5.2" evidence="1"/>
<dbReference type="EMBL" id="CP000821">
    <property type="protein sequence ID" value="ABV37727.1"/>
    <property type="molecule type" value="Genomic_DNA"/>
</dbReference>
<dbReference type="RefSeq" id="WP_012143457.1">
    <property type="nucleotide sequence ID" value="NC_009831.1"/>
</dbReference>
<dbReference type="SMR" id="A8FY04"/>
<dbReference type="STRING" id="425104.Ssed_3123"/>
<dbReference type="KEGG" id="sse:Ssed_3123"/>
<dbReference type="eggNOG" id="COG0518">
    <property type="taxonomic scope" value="Bacteria"/>
</dbReference>
<dbReference type="eggNOG" id="COG0519">
    <property type="taxonomic scope" value="Bacteria"/>
</dbReference>
<dbReference type="HOGENOM" id="CLU_014340_0_5_6"/>
<dbReference type="OrthoDB" id="9802219at2"/>
<dbReference type="UniPathway" id="UPA00189">
    <property type="reaction ID" value="UER00296"/>
</dbReference>
<dbReference type="Proteomes" id="UP000002015">
    <property type="component" value="Chromosome"/>
</dbReference>
<dbReference type="GO" id="GO:0005829">
    <property type="term" value="C:cytosol"/>
    <property type="evidence" value="ECO:0007669"/>
    <property type="project" value="TreeGrafter"/>
</dbReference>
<dbReference type="GO" id="GO:0005524">
    <property type="term" value="F:ATP binding"/>
    <property type="evidence" value="ECO:0007669"/>
    <property type="project" value="UniProtKB-UniRule"/>
</dbReference>
<dbReference type="GO" id="GO:0003921">
    <property type="term" value="F:GMP synthase activity"/>
    <property type="evidence" value="ECO:0007669"/>
    <property type="project" value="InterPro"/>
</dbReference>
<dbReference type="CDD" id="cd01742">
    <property type="entry name" value="GATase1_GMP_Synthase"/>
    <property type="match status" value="1"/>
</dbReference>
<dbReference type="CDD" id="cd01997">
    <property type="entry name" value="GMP_synthase_C"/>
    <property type="match status" value="1"/>
</dbReference>
<dbReference type="FunFam" id="3.30.300.10:FF:000002">
    <property type="entry name" value="GMP synthase [glutamine-hydrolyzing]"/>
    <property type="match status" value="1"/>
</dbReference>
<dbReference type="FunFam" id="3.40.50.620:FF:000001">
    <property type="entry name" value="GMP synthase [glutamine-hydrolyzing]"/>
    <property type="match status" value="1"/>
</dbReference>
<dbReference type="FunFam" id="3.40.50.880:FF:000001">
    <property type="entry name" value="GMP synthase [glutamine-hydrolyzing]"/>
    <property type="match status" value="1"/>
</dbReference>
<dbReference type="Gene3D" id="3.30.300.10">
    <property type="match status" value="1"/>
</dbReference>
<dbReference type="Gene3D" id="3.40.50.880">
    <property type="match status" value="1"/>
</dbReference>
<dbReference type="Gene3D" id="3.40.50.620">
    <property type="entry name" value="HUPs"/>
    <property type="match status" value="1"/>
</dbReference>
<dbReference type="HAMAP" id="MF_00344">
    <property type="entry name" value="GMP_synthase"/>
    <property type="match status" value="1"/>
</dbReference>
<dbReference type="InterPro" id="IPR029062">
    <property type="entry name" value="Class_I_gatase-like"/>
</dbReference>
<dbReference type="InterPro" id="IPR017926">
    <property type="entry name" value="GATASE"/>
</dbReference>
<dbReference type="InterPro" id="IPR001674">
    <property type="entry name" value="GMP_synth_C"/>
</dbReference>
<dbReference type="InterPro" id="IPR004739">
    <property type="entry name" value="GMP_synth_GATase"/>
</dbReference>
<dbReference type="InterPro" id="IPR022955">
    <property type="entry name" value="GMP_synthase"/>
</dbReference>
<dbReference type="InterPro" id="IPR025777">
    <property type="entry name" value="GMPS_ATP_PPase_dom"/>
</dbReference>
<dbReference type="InterPro" id="IPR022310">
    <property type="entry name" value="NAD/GMP_synthase"/>
</dbReference>
<dbReference type="InterPro" id="IPR014729">
    <property type="entry name" value="Rossmann-like_a/b/a_fold"/>
</dbReference>
<dbReference type="NCBIfam" id="TIGR00884">
    <property type="entry name" value="guaA_Cterm"/>
    <property type="match status" value="1"/>
</dbReference>
<dbReference type="NCBIfam" id="TIGR00888">
    <property type="entry name" value="guaA_Nterm"/>
    <property type="match status" value="1"/>
</dbReference>
<dbReference type="NCBIfam" id="NF000848">
    <property type="entry name" value="PRK00074.1"/>
    <property type="match status" value="1"/>
</dbReference>
<dbReference type="PANTHER" id="PTHR11922:SF2">
    <property type="entry name" value="GMP SYNTHASE [GLUTAMINE-HYDROLYZING]"/>
    <property type="match status" value="1"/>
</dbReference>
<dbReference type="PANTHER" id="PTHR11922">
    <property type="entry name" value="GMP SYNTHASE-RELATED"/>
    <property type="match status" value="1"/>
</dbReference>
<dbReference type="Pfam" id="PF00117">
    <property type="entry name" value="GATase"/>
    <property type="match status" value="1"/>
</dbReference>
<dbReference type="Pfam" id="PF00958">
    <property type="entry name" value="GMP_synt_C"/>
    <property type="match status" value="1"/>
</dbReference>
<dbReference type="Pfam" id="PF02540">
    <property type="entry name" value="NAD_synthase"/>
    <property type="match status" value="1"/>
</dbReference>
<dbReference type="PRINTS" id="PR00097">
    <property type="entry name" value="ANTSNTHASEII"/>
</dbReference>
<dbReference type="PRINTS" id="PR00099">
    <property type="entry name" value="CPSGATASE"/>
</dbReference>
<dbReference type="PRINTS" id="PR00096">
    <property type="entry name" value="GATASE"/>
</dbReference>
<dbReference type="SUPFAM" id="SSF52402">
    <property type="entry name" value="Adenine nucleotide alpha hydrolases-like"/>
    <property type="match status" value="1"/>
</dbReference>
<dbReference type="SUPFAM" id="SSF52317">
    <property type="entry name" value="Class I glutamine amidotransferase-like"/>
    <property type="match status" value="1"/>
</dbReference>
<dbReference type="SUPFAM" id="SSF54810">
    <property type="entry name" value="GMP synthetase C-terminal dimerisation domain"/>
    <property type="match status" value="1"/>
</dbReference>
<dbReference type="PROSITE" id="PS51273">
    <property type="entry name" value="GATASE_TYPE_1"/>
    <property type="match status" value="1"/>
</dbReference>
<dbReference type="PROSITE" id="PS51553">
    <property type="entry name" value="GMPS_ATP_PPASE"/>
    <property type="match status" value="1"/>
</dbReference>
<sequence>MSNIHEHKILILDFGSQYTQLIARRIREIGVYCELWAWDVSEAQIKGFAPNGIILAGGPESVTADESPRAPEYVFNAGVPVLGICYGMQTMSEQLGGKVIEGIGEGEFGYAQIEIQEPSELFKSIEDAISESGKPLLDVWMSHGDKVLDIPEGFVTVANTETCPHAAMANEDKKFYGVQFHPEVTHTRQGKRMLEHFALDICECEANWKPTSIIEDAVERLKKQIGDDEVILGLSGGVDSSVVAMLLHRAIGDKLTCVFVDNGLLRLNEADQVMDMFGDHFGLNIVHVNAENRFLDAMKGEADPEAKRKIIGHVFVEIFDEESKKCKNAKWLAQGTIYPDVIESAGSATGKAHVIKSHHNVGGLPDDMELGLVEPLRELFKDEVRKIGLELGLPYDMLYRHPFPGPGLGVRVLGEVKKEYCDLLRLADAIFIEELHKAELYHKVSQAFTVFLPVRSVGVMGDGRKYDWVVSLRAVETIDFMTAHWAHLPYDFLGRVSNRIINEIDGISRVVYDISGKPPATIEWE</sequence>
<comment type="function">
    <text evidence="1">Catalyzes the synthesis of GMP from XMP.</text>
</comment>
<comment type="catalytic activity">
    <reaction evidence="1">
        <text>XMP + L-glutamine + ATP + H2O = GMP + L-glutamate + AMP + diphosphate + 2 H(+)</text>
        <dbReference type="Rhea" id="RHEA:11680"/>
        <dbReference type="ChEBI" id="CHEBI:15377"/>
        <dbReference type="ChEBI" id="CHEBI:15378"/>
        <dbReference type="ChEBI" id="CHEBI:29985"/>
        <dbReference type="ChEBI" id="CHEBI:30616"/>
        <dbReference type="ChEBI" id="CHEBI:33019"/>
        <dbReference type="ChEBI" id="CHEBI:57464"/>
        <dbReference type="ChEBI" id="CHEBI:58115"/>
        <dbReference type="ChEBI" id="CHEBI:58359"/>
        <dbReference type="ChEBI" id="CHEBI:456215"/>
        <dbReference type="EC" id="6.3.5.2"/>
    </reaction>
</comment>
<comment type="pathway">
    <text evidence="1">Purine metabolism; GMP biosynthesis; GMP from XMP (L-Gln route): step 1/1.</text>
</comment>
<comment type="subunit">
    <text evidence="1">Homodimer.</text>
</comment>
<name>GUAA_SHESH</name>
<evidence type="ECO:0000255" key="1">
    <source>
        <dbReference type="HAMAP-Rule" id="MF_00344"/>
    </source>
</evidence>
<accession>A8FY04</accession>
<gene>
    <name evidence="1" type="primary">guaA</name>
    <name type="ordered locus">Ssed_3123</name>
</gene>
<protein>
    <recommendedName>
        <fullName evidence="1">GMP synthase [glutamine-hydrolyzing]</fullName>
        <ecNumber evidence="1">6.3.5.2</ecNumber>
    </recommendedName>
    <alternativeName>
        <fullName evidence="1">GMP synthetase</fullName>
    </alternativeName>
    <alternativeName>
        <fullName evidence="1">Glutamine amidotransferase</fullName>
    </alternativeName>
</protein>
<reference key="1">
    <citation type="submission" date="2007-08" db="EMBL/GenBank/DDBJ databases">
        <title>Complete sequence of Shewanella sediminis HAW-EB3.</title>
        <authorList>
            <consortium name="US DOE Joint Genome Institute"/>
            <person name="Copeland A."/>
            <person name="Lucas S."/>
            <person name="Lapidus A."/>
            <person name="Barry K."/>
            <person name="Glavina del Rio T."/>
            <person name="Dalin E."/>
            <person name="Tice H."/>
            <person name="Pitluck S."/>
            <person name="Chertkov O."/>
            <person name="Brettin T."/>
            <person name="Bruce D."/>
            <person name="Detter J.C."/>
            <person name="Han C."/>
            <person name="Schmutz J."/>
            <person name="Larimer F."/>
            <person name="Land M."/>
            <person name="Hauser L."/>
            <person name="Kyrpides N."/>
            <person name="Kim E."/>
            <person name="Zhao J.-S."/>
            <person name="Richardson P."/>
        </authorList>
    </citation>
    <scope>NUCLEOTIDE SEQUENCE [LARGE SCALE GENOMIC DNA]</scope>
    <source>
        <strain>HAW-EB3</strain>
    </source>
</reference>